<gene>
    <name type="primary">rab1D</name>
    <name type="ORF">DDB_G0284985</name>
</gene>
<dbReference type="EMBL" id="AAFI02000073">
    <property type="protein sequence ID" value="EAL64956.1"/>
    <property type="molecule type" value="Genomic_DNA"/>
</dbReference>
<dbReference type="RefSeq" id="XP_639975.1">
    <property type="nucleotide sequence ID" value="XM_634883.1"/>
</dbReference>
<dbReference type="SMR" id="Q54NU2"/>
<dbReference type="FunCoup" id="Q54NU2">
    <property type="interactions" value="10"/>
</dbReference>
<dbReference type="STRING" id="44689.Q54NU2"/>
<dbReference type="PaxDb" id="44689-DDB0229398"/>
<dbReference type="EnsemblProtists" id="EAL64956">
    <property type="protein sequence ID" value="EAL64956"/>
    <property type="gene ID" value="DDB_G0284985"/>
</dbReference>
<dbReference type="GeneID" id="8624886"/>
<dbReference type="KEGG" id="ddi:DDB_G0284985"/>
<dbReference type="dictyBase" id="DDB_G0284985">
    <property type="gene designation" value="rab1D"/>
</dbReference>
<dbReference type="VEuPathDB" id="AmoebaDB:DDB_G0284985"/>
<dbReference type="eggNOG" id="KOG0084">
    <property type="taxonomic scope" value="Eukaryota"/>
</dbReference>
<dbReference type="HOGENOM" id="CLU_041217_23_1_1"/>
<dbReference type="InParanoid" id="Q54NU2"/>
<dbReference type="OMA" id="FISMARD"/>
<dbReference type="PhylomeDB" id="Q54NU2"/>
<dbReference type="Reactome" id="R-DDI-162658">
    <property type="pathway name" value="Golgi Cisternae Pericentriolar Stack Reorganization"/>
</dbReference>
<dbReference type="Reactome" id="R-DDI-204005">
    <property type="pathway name" value="COPII-mediated vesicle transport"/>
</dbReference>
<dbReference type="Reactome" id="R-DDI-6807878">
    <property type="pathway name" value="COPI-mediated anterograde transport"/>
</dbReference>
<dbReference type="Reactome" id="R-DDI-6811434">
    <property type="pathway name" value="COPI-dependent Golgi-to-ER retrograde traffic"/>
</dbReference>
<dbReference type="Reactome" id="R-DDI-6811440">
    <property type="pathway name" value="Retrograde transport at the Trans-Golgi-Network"/>
</dbReference>
<dbReference type="Reactome" id="R-DDI-8873719">
    <property type="pathway name" value="RAB geranylgeranylation"/>
</dbReference>
<dbReference type="Reactome" id="R-DDI-8876198">
    <property type="pathway name" value="RAB GEFs exchange GTP for GDP on RABs"/>
</dbReference>
<dbReference type="PRO" id="PR:Q54NU2"/>
<dbReference type="Proteomes" id="UP000002195">
    <property type="component" value="Chromosome 4"/>
</dbReference>
<dbReference type="GO" id="GO:0012505">
    <property type="term" value="C:endomembrane system"/>
    <property type="evidence" value="ECO:0000318"/>
    <property type="project" value="GO_Central"/>
</dbReference>
<dbReference type="GO" id="GO:0005811">
    <property type="term" value="C:lipid droplet"/>
    <property type="evidence" value="ECO:0007005"/>
    <property type="project" value="dictyBase"/>
</dbReference>
<dbReference type="GO" id="GO:0140220">
    <property type="term" value="C:pathogen-containing vacuole"/>
    <property type="evidence" value="ECO:0007005"/>
    <property type="project" value="dictyBase"/>
</dbReference>
<dbReference type="GO" id="GO:0045335">
    <property type="term" value="C:phagocytic vesicle"/>
    <property type="evidence" value="ECO:0007005"/>
    <property type="project" value="dictyBase"/>
</dbReference>
<dbReference type="GO" id="GO:0005886">
    <property type="term" value="C:plasma membrane"/>
    <property type="evidence" value="ECO:0007669"/>
    <property type="project" value="UniProtKB-SubCell"/>
</dbReference>
<dbReference type="GO" id="GO:0005525">
    <property type="term" value="F:GTP binding"/>
    <property type="evidence" value="ECO:0007669"/>
    <property type="project" value="UniProtKB-KW"/>
</dbReference>
<dbReference type="GO" id="GO:0003924">
    <property type="term" value="F:GTPase activity"/>
    <property type="evidence" value="ECO:0000318"/>
    <property type="project" value="GO_Central"/>
</dbReference>
<dbReference type="GO" id="GO:0006886">
    <property type="term" value="P:intracellular protein transport"/>
    <property type="evidence" value="ECO:0000318"/>
    <property type="project" value="GO_Central"/>
</dbReference>
<dbReference type="CDD" id="cd01869">
    <property type="entry name" value="Rab1_Ypt1"/>
    <property type="match status" value="1"/>
</dbReference>
<dbReference type="FunFam" id="3.40.50.300:FF:001447">
    <property type="entry name" value="Ras-related protein Rab-1B"/>
    <property type="match status" value="1"/>
</dbReference>
<dbReference type="Gene3D" id="3.40.50.300">
    <property type="entry name" value="P-loop containing nucleotide triphosphate hydrolases"/>
    <property type="match status" value="1"/>
</dbReference>
<dbReference type="InterPro" id="IPR027417">
    <property type="entry name" value="P-loop_NTPase"/>
</dbReference>
<dbReference type="InterPro" id="IPR050227">
    <property type="entry name" value="Rab"/>
</dbReference>
<dbReference type="InterPro" id="IPR005225">
    <property type="entry name" value="Small_GTP-bd"/>
</dbReference>
<dbReference type="InterPro" id="IPR001806">
    <property type="entry name" value="Small_GTPase"/>
</dbReference>
<dbReference type="NCBIfam" id="TIGR00231">
    <property type="entry name" value="small_GTP"/>
    <property type="match status" value="1"/>
</dbReference>
<dbReference type="PANTHER" id="PTHR47977">
    <property type="entry name" value="RAS-RELATED PROTEIN RAB"/>
    <property type="match status" value="1"/>
</dbReference>
<dbReference type="Pfam" id="PF00071">
    <property type="entry name" value="Ras"/>
    <property type="match status" value="1"/>
</dbReference>
<dbReference type="PRINTS" id="PR00449">
    <property type="entry name" value="RASTRNSFRMNG"/>
</dbReference>
<dbReference type="SMART" id="SM00177">
    <property type="entry name" value="ARF"/>
    <property type="match status" value="1"/>
</dbReference>
<dbReference type="SMART" id="SM00175">
    <property type="entry name" value="RAB"/>
    <property type="match status" value="1"/>
</dbReference>
<dbReference type="SMART" id="SM00176">
    <property type="entry name" value="RAN"/>
    <property type="match status" value="1"/>
</dbReference>
<dbReference type="SMART" id="SM00173">
    <property type="entry name" value="RAS"/>
    <property type="match status" value="1"/>
</dbReference>
<dbReference type="SMART" id="SM00174">
    <property type="entry name" value="RHO"/>
    <property type="match status" value="1"/>
</dbReference>
<dbReference type="SUPFAM" id="SSF52540">
    <property type="entry name" value="P-loop containing nucleoside triphosphate hydrolases"/>
    <property type="match status" value="1"/>
</dbReference>
<dbReference type="PROSITE" id="PS51419">
    <property type="entry name" value="RAB"/>
    <property type="match status" value="1"/>
</dbReference>
<name>RAB1D_DICDI</name>
<feature type="chain" id="PRO_0000332749" description="Ras-related protein Rab-1D">
    <location>
        <begin position="1"/>
        <end position="204"/>
    </location>
</feature>
<feature type="region of interest" description="Disordered" evidence="3">
    <location>
        <begin position="182"/>
        <end position="204"/>
    </location>
</feature>
<feature type="short sequence motif" description="Effector region" evidence="1">
    <location>
        <begin position="39"/>
        <end position="47"/>
    </location>
</feature>
<feature type="compositionally biased region" description="Basic and acidic residues" evidence="3">
    <location>
        <begin position="182"/>
        <end position="191"/>
    </location>
</feature>
<feature type="compositionally biased region" description="Basic residues" evidence="3">
    <location>
        <begin position="192"/>
        <end position="204"/>
    </location>
</feature>
<feature type="binding site" evidence="2">
    <location>
        <begin position="17"/>
        <end position="25"/>
    </location>
    <ligand>
        <name>GTP</name>
        <dbReference type="ChEBI" id="CHEBI:37565"/>
    </ligand>
</feature>
<feature type="binding site" evidence="2">
    <location>
        <begin position="35"/>
        <end position="42"/>
    </location>
    <ligand>
        <name>GTP</name>
        <dbReference type="ChEBI" id="CHEBI:37565"/>
    </ligand>
</feature>
<feature type="binding site" evidence="2">
    <location>
        <begin position="65"/>
        <end position="69"/>
    </location>
    <ligand>
        <name>GTP</name>
        <dbReference type="ChEBI" id="CHEBI:37565"/>
    </ligand>
</feature>
<feature type="binding site" evidence="2">
    <location>
        <begin position="123"/>
        <end position="126"/>
    </location>
    <ligand>
        <name>GTP</name>
        <dbReference type="ChEBI" id="CHEBI:37565"/>
    </ligand>
</feature>
<feature type="binding site" evidence="2">
    <location>
        <begin position="153"/>
        <end position="155"/>
    </location>
    <ligand>
        <name>GTP</name>
        <dbReference type="ChEBI" id="CHEBI:37565"/>
    </ligand>
</feature>
<feature type="lipid moiety-binding region" description="S-geranylgeranyl cysteine" evidence="1">
    <location>
        <position position="204"/>
    </location>
</feature>
<sequence>MSMAPEHDFFFKILLIGDSGVGKSCLLLRFADDSWTDTHISTIGVDFKIKTLNLDGKTIKLQIWDTAGQERFRTITSSYYRGAQGIILVYDCTDQDSFTNVKQWMGEIDRYACENVNKLLVGNKTDLVNEKVVDSNQAKSFAESYGIPFIETSAKNATNVEECFISMARDIKNRLADIQETPKPDEVDIKSKNKTKSGGKKSFC</sequence>
<comment type="subcellular location">
    <subcellularLocation>
        <location evidence="4">Cell membrane</location>
        <topology evidence="4">Lipid-anchor</topology>
        <orientation evidence="4">Cytoplasmic side</orientation>
    </subcellularLocation>
</comment>
<comment type="similarity">
    <text evidence="4">Belongs to the small GTPase superfamily. Rab family.</text>
</comment>
<accession>Q54NU2</accession>
<keyword id="KW-1003">Cell membrane</keyword>
<keyword id="KW-0342">GTP-binding</keyword>
<keyword id="KW-0449">Lipoprotein</keyword>
<keyword id="KW-0472">Membrane</keyword>
<keyword id="KW-0547">Nucleotide-binding</keyword>
<keyword id="KW-0636">Prenylation</keyword>
<keyword id="KW-1185">Reference proteome</keyword>
<reference key="1">
    <citation type="journal article" date="2005" name="Nature">
        <title>The genome of the social amoeba Dictyostelium discoideum.</title>
        <authorList>
            <person name="Eichinger L."/>
            <person name="Pachebat J.A."/>
            <person name="Gloeckner G."/>
            <person name="Rajandream M.A."/>
            <person name="Sucgang R."/>
            <person name="Berriman M."/>
            <person name="Song J."/>
            <person name="Olsen R."/>
            <person name="Szafranski K."/>
            <person name="Xu Q."/>
            <person name="Tunggal B."/>
            <person name="Kummerfeld S."/>
            <person name="Madera M."/>
            <person name="Konfortov B.A."/>
            <person name="Rivero F."/>
            <person name="Bankier A.T."/>
            <person name="Lehmann R."/>
            <person name="Hamlin N."/>
            <person name="Davies R."/>
            <person name="Gaudet P."/>
            <person name="Fey P."/>
            <person name="Pilcher K."/>
            <person name="Chen G."/>
            <person name="Saunders D."/>
            <person name="Sodergren E.J."/>
            <person name="Davis P."/>
            <person name="Kerhornou A."/>
            <person name="Nie X."/>
            <person name="Hall N."/>
            <person name="Anjard C."/>
            <person name="Hemphill L."/>
            <person name="Bason N."/>
            <person name="Farbrother P."/>
            <person name="Desany B."/>
            <person name="Just E."/>
            <person name="Morio T."/>
            <person name="Rost R."/>
            <person name="Churcher C.M."/>
            <person name="Cooper J."/>
            <person name="Haydock S."/>
            <person name="van Driessche N."/>
            <person name="Cronin A."/>
            <person name="Goodhead I."/>
            <person name="Muzny D.M."/>
            <person name="Mourier T."/>
            <person name="Pain A."/>
            <person name="Lu M."/>
            <person name="Harper D."/>
            <person name="Lindsay R."/>
            <person name="Hauser H."/>
            <person name="James K.D."/>
            <person name="Quiles M."/>
            <person name="Madan Babu M."/>
            <person name="Saito T."/>
            <person name="Buchrieser C."/>
            <person name="Wardroper A."/>
            <person name="Felder M."/>
            <person name="Thangavelu M."/>
            <person name="Johnson D."/>
            <person name="Knights A."/>
            <person name="Loulseged H."/>
            <person name="Mungall K.L."/>
            <person name="Oliver K."/>
            <person name="Price C."/>
            <person name="Quail M.A."/>
            <person name="Urushihara H."/>
            <person name="Hernandez J."/>
            <person name="Rabbinowitsch E."/>
            <person name="Steffen D."/>
            <person name="Sanders M."/>
            <person name="Ma J."/>
            <person name="Kohara Y."/>
            <person name="Sharp S."/>
            <person name="Simmonds M.N."/>
            <person name="Spiegler S."/>
            <person name="Tivey A."/>
            <person name="Sugano S."/>
            <person name="White B."/>
            <person name="Walker D."/>
            <person name="Woodward J.R."/>
            <person name="Winckler T."/>
            <person name="Tanaka Y."/>
            <person name="Shaulsky G."/>
            <person name="Schleicher M."/>
            <person name="Weinstock G.M."/>
            <person name="Rosenthal A."/>
            <person name="Cox E.C."/>
            <person name="Chisholm R.L."/>
            <person name="Gibbs R.A."/>
            <person name="Loomis W.F."/>
            <person name="Platzer M."/>
            <person name="Kay R.R."/>
            <person name="Williams J.G."/>
            <person name="Dear P.H."/>
            <person name="Noegel A.A."/>
            <person name="Barrell B.G."/>
            <person name="Kuspa A."/>
        </authorList>
    </citation>
    <scope>NUCLEOTIDE SEQUENCE [LARGE SCALE GENOMIC DNA]</scope>
    <source>
        <strain>AX4</strain>
    </source>
</reference>
<reference key="2">
    <citation type="journal article" date="2006" name="Mol. Cell. Proteomics">
        <title>Proteomics fingerprinting of phagosome maturation and evidence for the role of a Galpha during uptake.</title>
        <authorList>
            <person name="Gotthardt D."/>
            <person name="Blancheteau V."/>
            <person name="Bosserhoff A."/>
            <person name="Ruppert T."/>
            <person name="Delorenzi M."/>
            <person name="Soldati T."/>
        </authorList>
    </citation>
    <scope>IDENTIFICATION BY MASS SPECTROMETRY [LARGE SCALE ANALYSIS]</scope>
    <source>
        <strain>AX2</strain>
    </source>
</reference>
<proteinExistence type="evidence at protein level"/>
<organism>
    <name type="scientific">Dictyostelium discoideum</name>
    <name type="common">Social amoeba</name>
    <dbReference type="NCBI Taxonomy" id="44689"/>
    <lineage>
        <taxon>Eukaryota</taxon>
        <taxon>Amoebozoa</taxon>
        <taxon>Evosea</taxon>
        <taxon>Eumycetozoa</taxon>
        <taxon>Dictyostelia</taxon>
        <taxon>Dictyosteliales</taxon>
        <taxon>Dictyosteliaceae</taxon>
        <taxon>Dictyostelium</taxon>
    </lineage>
</organism>
<evidence type="ECO:0000250" key="1"/>
<evidence type="ECO:0000250" key="2">
    <source>
        <dbReference type="UniProtKB" id="P62820"/>
    </source>
</evidence>
<evidence type="ECO:0000256" key="3">
    <source>
        <dbReference type="SAM" id="MobiDB-lite"/>
    </source>
</evidence>
<evidence type="ECO:0000305" key="4"/>
<protein>
    <recommendedName>
        <fullName>Ras-related protein Rab-1D</fullName>
    </recommendedName>
</protein>